<evidence type="ECO:0000255" key="1"/>
<evidence type="ECO:0000269" key="2">
    <source>
    </source>
</evidence>
<evidence type="ECO:0000269" key="3">
    <source>
    </source>
</evidence>
<evidence type="ECO:0000303" key="4">
    <source>
    </source>
</evidence>
<evidence type="ECO:0000303" key="5">
    <source>
    </source>
</evidence>
<evidence type="ECO:0000305" key="6"/>
<evidence type="ECO:0000305" key="7">
    <source>
    </source>
</evidence>
<evidence type="ECO:0000312" key="8">
    <source>
        <dbReference type="EMBL" id="EDP01251.1"/>
    </source>
</evidence>
<evidence type="ECO:0000312" key="9">
    <source>
        <dbReference type="EMBL" id="PNW72329.1"/>
    </source>
</evidence>
<evidence type="ECO:0000312" key="10">
    <source>
        <dbReference type="Proteomes" id="UP000006906"/>
    </source>
</evidence>
<protein>
    <recommendedName>
        <fullName evidence="6">Dynein axonemal assembly factor 10</fullName>
    </recommendedName>
    <alternativeName>
        <fullName evidence="4 5">WD repeat-containing protein 92</fullName>
    </alternativeName>
</protein>
<accession>A8J3F6</accession>
<dbReference type="EMBL" id="DS496135">
    <property type="protein sequence ID" value="EDP01251.1"/>
    <property type="molecule type" value="Genomic_DNA"/>
</dbReference>
<dbReference type="EMBL" id="CM008977">
    <property type="protein sequence ID" value="PNW72329.1"/>
    <property type="molecule type" value="Genomic_DNA"/>
</dbReference>
<dbReference type="RefSeq" id="XP_001695914.1">
    <property type="nucleotide sequence ID" value="XM_001695862.1"/>
</dbReference>
<dbReference type="SMR" id="A8J3F6"/>
<dbReference type="STRING" id="3055.A8J3F6"/>
<dbReference type="PaxDb" id="3055-EDP01251"/>
<dbReference type="EnsemblPlants" id="PNW72329">
    <property type="protein sequence ID" value="PNW72329"/>
    <property type="gene ID" value="CHLRE_16g672600v5"/>
</dbReference>
<dbReference type="GeneID" id="5721407"/>
<dbReference type="Gramene" id="PNW72329">
    <property type="protein sequence ID" value="PNW72329"/>
    <property type="gene ID" value="CHLRE_16g672600v5"/>
</dbReference>
<dbReference type="KEGG" id="cre:CHLRE_16g672600v5"/>
<dbReference type="eggNOG" id="ENOG502QRKB">
    <property type="taxonomic scope" value="Eukaryota"/>
</dbReference>
<dbReference type="HOGENOM" id="CLU_062543_0_0_1"/>
<dbReference type="InParanoid" id="A8J3F6"/>
<dbReference type="OMA" id="CLWKYNY"/>
<dbReference type="OrthoDB" id="10248252at2759"/>
<dbReference type="Proteomes" id="UP000006906">
    <property type="component" value="Chromosome 16"/>
</dbReference>
<dbReference type="GO" id="GO:0120293">
    <property type="term" value="C:dynein axonemal particle"/>
    <property type="evidence" value="ECO:0000314"/>
    <property type="project" value="UniProtKB"/>
</dbReference>
<dbReference type="GO" id="GO:0043130">
    <property type="term" value="F:ubiquitin binding"/>
    <property type="evidence" value="ECO:0000318"/>
    <property type="project" value="GO_Central"/>
</dbReference>
<dbReference type="GO" id="GO:0070286">
    <property type="term" value="P:axonemal dynein complex assembly"/>
    <property type="evidence" value="ECO:0000314"/>
    <property type="project" value="UniProtKB"/>
</dbReference>
<dbReference type="Gene3D" id="2.130.10.10">
    <property type="entry name" value="YVTN repeat-like/Quinoprotein amine dehydrogenase"/>
    <property type="match status" value="1"/>
</dbReference>
<dbReference type="InterPro" id="IPR015943">
    <property type="entry name" value="WD40/YVTN_repeat-like_dom_sf"/>
</dbReference>
<dbReference type="InterPro" id="IPR036322">
    <property type="entry name" value="WD40_repeat_dom_sf"/>
</dbReference>
<dbReference type="InterPro" id="IPR001680">
    <property type="entry name" value="WD40_rpt"/>
</dbReference>
<dbReference type="PANTHER" id="PTHR10971">
    <property type="entry name" value="MRNA EXPORT FACTOR AND BUB3"/>
    <property type="match status" value="1"/>
</dbReference>
<dbReference type="Pfam" id="PF00400">
    <property type="entry name" value="WD40"/>
    <property type="match status" value="1"/>
</dbReference>
<dbReference type="SMART" id="SM00320">
    <property type="entry name" value="WD40"/>
    <property type="match status" value="3"/>
</dbReference>
<dbReference type="SUPFAM" id="SSF50978">
    <property type="entry name" value="WD40 repeat-like"/>
    <property type="match status" value="1"/>
</dbReference>
<dbReference type="PROSITE" id="PS00678">
    <property type="entry name" value="WD_REPEATS_1"/>
    <property type="match status" value="1"/>
</dbReference>
<dbReference type="PROSITE" id="PS50082">
    <property type="entry name" value="WD_REPEATS_2"/>
    <property type="match status" value="1"/>
</dbReference>
<dbReference type="PROSITE" id="PS50294">
    <property type="entry name" value="WD_REPEATS_REGION"/>
    <property type="match status" value="1"/>
</dbReference>
<sequence>MDLQNKPQILEHLHKSLTVTLYDCRWIPGTAKFVTLGSYARNTGCLQVYELEGPDLKTVKETEKKHSFKCGTFGASSLAERRLATGNFGGEVQIWDLENTAQPVFTAQAHASIVNAIDGCGGQAKGYGAPELATCGRDGCVRVWDVRQQDAPVAAFEPADPNNVRDCWCVAFGNSFNDNERCLLAGYDNGDVKMFDLRMNKVRWETNVRNGVCGLQFDRKDISMNKFAVCCLEAQFHVFDARTQHPKKGFASVSEKITAGATVWGAQHLPQNREVFMVSAGDGNLYLYKYHYPDQRKVKDHDGQELGVAGSVEMLNYKNISTQPVAGFDWSPDKEGLFACVAFDQAVRVGIVTKLNKV</sequence>
<keyword id="KW-0053">Apoptosis</keyword>
<keyword id="KW-0963">Cytoplasm</keyword>
<keyword id="KW-1185">Reference proteome</keyword>
<keyword id="KW-0677">Repeat</keyword>
<keyword id="KW-0853">WD repeat</keyword>
<organism>
    <name type="scientific">Chlamydomonas reinhardtii</name>
    <name type="common">Chlamydomonas smithii</name>
    <dbReference type="NCBI Taxonomy" id="3055"/>
    <lineage>
        <taxon>Eukaryota</taxon>
        <taxon>Viridiplantae</taxon>
        <taxon>Chlorophyta</taxon>
        <taxon>core chlorophytes</taxon>
        <taxon>Chlorophyceae</taxon>
        <taxon>CS clade</taxon>
        <taxon>Chlamydomonadales</taxon>
        <taxon>Chlamydomonadaceae</taxon>
        <taxon>Chlamydomonas</taxon>
    </lineage>
</organism>
<name>DAA10_CHLRE</name>
<comment type="function">
    <text evidence="3">Key assembly factor specifically required for the stability of axonemal dynein heavy chains in cytoplasm.</text>
</comment>
<comment type="subunit">
    <text evidence="2 7">Interacts with PIH1D1; the interaction associates DNAAF10 with the R2TP complex (Probable). Interacts with several dynein axonemal assembly factors (PubMed:30428028).</text>
</comment>
<comment type="subcellular location">
    <subcellularLocation>
        <location evidence="7">Dynein axonemal particle</location>
    </subcellularLocation>
</comment>
<comment type="disruption phenotype">
    <text evidence="2">Mutants show ciliary loss with disappearance of axonemal dynein arms and diminishment of dynein arm heavy chains in the cytoplasm. They have reduced beat frequency and dyskinetic motion of the remaining ventral cilia.</text>
</comment>
<reference evidence="8 10" key="1">
    <citation type="journal article" date="2007" name="Science">
        <title>The Chlamydomonas genome reveals the evolution of key animal and plant functions.</title>
        <authorList>
            <person name="Merchant S.S."/>
            <person name="Prochnik S.E."/>
            <person name="Vallon O."/>
            <person name="Harris E.H."/>
            <person name="Karpowicz S.J."/>
            <person name="Witman G.B."/>
            <person name="Terry A."/>
            <person name="Salamov A."/>
            <person name="Fritz-Laylin L.K."/>
            <person name="Marechal-Drouard L."/>
            <person name="Marshall W.F."/>
            <person name="Qu L.H."/>
            <person name="Nelson D.R."/>
            <person name="Sanderfoot A.A."/>
            <person name="Spalding M.H."/>
            <person name="Kapitonov V.V."/>
            <person name="Ren Q."/>
            <person name="Ferris P."/>
            <person name="Lindquist E."/>
            <person name="Shapiro H."/>
            <person name="Lucas S.M."/>
            <person name="Grimwood J."/>
            <person name="Schmutz J."/>
            <person name="Cardol P."/>
            <person name="Cerutti H."/>
            <person name="Chanfreau G."/>
            <person name="Chen C.L."/>
            <person name="Cognat V."/>
            <person name="Croft M.T."/>
            <person name="Dent R."/>
            <person name="Dutcher S."/>
            <person name="Fernandez E."/>
            <person name="Fukuzawa H."/>
            <person name="Gonzalez-Ballester D."/>
            <person name="Gonzalez-Halphen D."/>
            <person name="Hallmann A."/>
            <person name="Hanikenne M."/>
            <person name="Hippler M."/>
            <person name="Inwood W."/>
            <person name="Jabbari K."/>
            <person name="Kalanon M."/>
            <person name="Kuras R."/>
            <person name="Lefebvre P.A."/>
            <person name="Lemaire S.D."/>
            <person name="Lobanov A.V."/>
            <person name="Lohr M."/>
            <person name="Manuell A."/>
            <person name="Meier I."/>
            <person name="Mets L."/>
            <person name="Mittag M."/>
            <person name="Mittelmeier T."/>
            <person name="Moroney J.V."/>
            <person name="Moseley J."/>
            <person name="Napoli C."/>
            <person name="Nedelcu A.M."/>
            <person name="Niyogi K."/>
            <person name="Novoselov S.V."/>
            <person name="Paulsen I.T."/>
            <person name="Pazour G.J."/>
            <person name="Purton S."/>
            <person name="Ral J.P."/>
            <person name="Riano-Pachon D.M."/>
            <person name="Riekhof W."/>
            <person name="Rymarquis L."/>
            <person name="Schroda M."/>
            <person name="Stern D."/>
            <person name="Umen J."/>
            <person name="Willows R."/>
            <person name="Wilson N."/>
            <person name="Zimmer S.L."/>
            <person name="Allmer J."/>
            <person name="Balk J."/>
            <person name="Bisova K."/>
            <person name="Chen C.J."/>
            <person name="Elias M."/>
            <person name="Gendler K."/>
            <person name="Hauser C."/>
            <person name="Lamb M.R."/>
            <person name="Ledford H."/>
            <person name="Long J.C."/>
            <person name="Minagawa J."/>
            <person name="Page M.D."/>
            <person name="Pan J."/>
            <person name="Pootakham W."/>
            <person name="Roje S."/>
            <person name="Rose A."/>
            <person name="Stahlberg E."/>
            <person name="Terauchi A.M."/>
            <person name="Yang P."/>
            <person name="Ball S."/>
            <person name="Bowler C."/>
            <person name="Dieckmann C.L."/>
            <person name="Gladyshev V.N."/>
            <person name="Green P."/>
            <person name="Jorgensen R."/>
            <person name="Mayfield S."/>
            <person name="Mueller-Roeber B."/>
            <person name="Rajamani S."/>
            <person name="Sayre R.T."/>
            <person name="Brokstein P."/>
            <person name="Dubchak I."/>
            <person name="Goodstein D."/>
            <person name="Hornick L."/>
            <person name="Huang Y.W."/>
            <person name="Jhaveri J."/>
            <person name="Luo Y."/>
            <person name="Martinez D."/>
            <person name="Ngau W.C."/>
            <person name="Otillar B."/>
            <person name="Poliakov A."/>
            <person name="Porter A."/>
            <person name="Szajkowski L."/>
            <person name="Werner G."/>
            <person name="Zhou K."/>
            <person name="Grigoriev I.V."/>
            <person name="Rokhsar D.S."/>
            <person name="Grossman A.R."/>
        </authorList>
    </citation>
    <scope>NUCLEOTIDE SEQUENCE [LARGE SCALE GENOMIC DNA]</scope>
    <source>
        <strain evidence="8">ATCC PRA-142</strain>
        <strain evidence="10">CC-503</strain>
    </source>
</reference>
<reference evidence="9" key="2">
    <citation type="submission" date="2017-07" db="EMBL/GenBank/DDBJ databases">
        <title>WGS assembly of Chlamydomonas reinhardtii.</title>
        <authorList>
            <consortium name="Chlamydomonas Annotation Team"/>
            <consortium name="JGI Annotation Team"/>
            <person name="Merchant S.S."/>
            <person name="Prochnik S.E."/>
            <person name="Vallon O."/>
            <person name="Harris E.H."/>
            <person name="Karpowicz S.J."/>
            <person name="Witman G.B."/>
            <person name="Terry A."/>
            <person name="Salamov A."/>
            <person name="Fritz-Laylin L.K."/>
            <person name="Marechal-Drouard L."/>
            <person name="Marshall W.F."/>
            <person name="Qu L.H."/>
            <person name="Nelson D.R."/>
            <person name="Sanderfoot A.A."/>
            <person name="Spalding M.H."/>
            <person name="Kapitonov V.V."/>
            <person name="Ren Q."/>
            <person name="Ferris P."/>
            <person name="Lindquist E."/>
            <person name="Shapiro H."/>
            <person name="Lucas S.M."/>
            <person name="Grimwood J."/>
            <person name="Schmutz J."/>
            <person name="Grigoriev I.V."/>
            <person name="Rokhsar D.S."/>
        </authorList>
    </citation>
    <scope>GENOME REANNOTATION</scope>
    <source>
        <strain evidence="9">ATCC PRA-142</strain>
    </source>
</reference>
<reference key="3">
    <citation type="journal article" date="2019" name="J. Mol. Cell Biol.">
        <title>Chlamydomonas WDR92 in association with R2TP-like complex and multiple DNAAFs to regulate ciliary dynein preassembly.</title>
        <authorList>
            <person name="Liu G."/>
            <person name="Wang L."/>
            <person name="Pan J."/>
        </authorList>
    </citation>
    <scope>DISRUPTION PHENOTYPE</scope>
    <scope>FUNCTION</scope>
    <scope>INTERACTION WITH R2TP COMPLEX</scope>
    <scope>SUBCELLULAR LOCATION</scope>
</reference>
<reference key="4">
    <citation type="journal article" date="2019" name="Mol. Biol. Cell">
        <title>WDR92 is required for axonemal dynein heavy chain stability in cytoplasm.</title>
        <authorList>
            <person name="Patel-King R.S."/>
            <person name="Sakato-Antoku M."/>
            <person name="Yankova M."/>
            <person name="King S.M."/>
        </authorList>
    </citation>
    <scope>FUNCTION</scope>
</reference>
<proteinExistence type="evidence at protein level"/>
<feature type="chain" id="PRO_0000452688" description="Dynein axonemal assembly factor 10">
    <location>
        <begin position="1"/>
        <end position="358"/>
    </location>
</feature>
<feature type="repeat" description="WD 1" evidence="1">
    <location>
        <begin position="63"/>
        <end position="105"/>
    </location>
</feature>
<feature type="repeat" description="WD 2" evidence="1">
    <location>
        <begin position="109"/>
        <end position="154"/>
    </location>
</feature>
<feature type="repeat" description="WD 3" evidence="1">
    <location>
        <begin position="162"/>
        <end position="205"/>
    </location>
</feature>
<feature type="repeat" description="WD 4" evidence="1">
    <location>
        <begin position="207"/>
        <end position="249"/>
    </location>
</feature>
<feature type="repeat" description="WD 5" evidence="1">
    <location>
        <begin position="258"/>
        <end position="298"/>
    </location>
</feature>
<feature type="repeat" description="WD 6" evidence="1">
    <location>
        <begin position="320"/>
        <end position="358"/>
    </location>
</feature>
<gene>
    <name type="primary">dnaaf10</name>
    <name evidence="4 5" type="synonym">wdr92</name>
    <name evidence="9" type="ORF">CHLRE_16g672600v5</name>
    <name evidence="8" type="ORF">CHLREDRAFT_191514</name>
</gene>